<feature type="chain" id="PRO_0000048917" description="Homeobox protein HD-8">
    <location>
        <begin position="1"/>
        <end position="125"/>
    </location>
</feature>
<feature type="DNA-binding region" description="Homeobox" evidence="1">
    <location>
        <begin position="30"/>
        <end position="89"/>
    </location>
</feature>
<dbReference type="EMBL" id="AL590443">
    <property type="protein sequence ID" value="CAD26206.1"/>
    <property type="molecule type" value="Genomic_DNA"/>
</dbReference>
<dbReference type="EMBL" id="BK001339">
    <property type="protein sequence ID" value="DAA01302.1"/>
    <property type="molecule type" value="Genomic_DNA"/>
</dbReference>
<dbReference type="RefSeq" id="NP_597571.1">
    <property type="nucleotide sequence ID" value="NM_001040935.1"/>
</dbReference>
<dbReference type="SMR" id="Q8SW51"/>
<dbReference type="GeneID" id="858733"/>
<dbReference type="KEGG" id="ecu:ECU03_0600"/>
<dbReference type="VEuPathDB" id="MicrosporidiaDB:ECU03_0600"/>
<dbReference type="HOGENOM" id="CLU_128308_0_0_1"/>
<dbReference type="InParanoid" id="Q8SW51"/>
<dbReference type="OMA" id="SEIFRMT"/>
<dbReference type="OrthoDB" id="6159439at2759"/>
<dbReference type="Proteomes" id="UP000000819">
    <property type="component" value="Chromosome III"/>
</dbReference>
<dbReference type="GO" id="GO:0005634">
    <property type="term" value="C:nucleus"/>
    <property type="evidence" value="ECO:0007669"/>
    <property type="project" value="UniProtKB-SubCell"/>
</dbReference>
<dbReference type="GO" id="GO:0003677">
    <property type="term" value="F:DNA binding"/>
    <property type="evidence" value="ECO:0007669"/>
    <property type="project" value="UniProtKB-KW"/>
</dbReference>
<dbReference type="CDD" id="cd00086">
    <property type="entry name" value="homeodomain"/>
    <property type="match status" value="1"/>
</dbReference>
<dbReference type="Gene3D" id="1.10.10.60">
    <property type="entry name" value="Homeodomain-like"/>
    <property type="match status" value="1"/>
</dbReference>
<dbReference type="InterPro" id="IPR001356">
    <property type="entry name" value="HD"/>
</dbReference>
<dbReference type="InterPro" id="IPR009057">
    <property type="entry name" value="Homeodomain-like_sf"/>
</dbReference>
<dbReference type="Pfam" id="PF00046">
    <property type="entry name" value="Homeodomain"/>
    <property type="match status" value="1"/>
</dbReference>
<dbReference type="SMART" id="SM00389">
    <property type="entry name" value="HOX"/>
    <property type="match status" value="1"/>
</dbReference>
<dbReference type="SUPFAM" id="SSF46689">
    <property type="entry name" value="Homeodomain-like"/>
    <property type="match status" value="1"/>
</dbReference>
<dbReference type="PROSITE" id="PS50071">
    <property type="entry name" value="HOMEOBOX_2"/>
    <property type="match status" value="1"/>
</dbReference>
<gene>
    <name type="primary">HD-8</name>
    <name type="ordered locus">ECU03_0600</name>
</gene>
<protein>
    <recommendedName>
        <fullName>Homeobox protein HD-8</fullName>
    </recommendedName>
    <alternativeName>
        <fullName>EcHD-8</fullName>
    </alternativeName>
</protein>
<organism>
    <name type="scientific">Encephalitozoon cuniculi (strain GB-M1)</name>
    <name type="common">Microsporidian parasite</name>
    <dbReference type="NCBI Taxonomy" id="284813"/>
    <lineage>
        <taxon>Eukaryota</taxon>
        <taxon>Fungi</taxon>
        <taxon>Fungi incertae sedis</taxon>
        <taxon>Microsporidia</taxon>
        <taxon>Unikaryonidae</taxon>
        <taxon>Encephalitozoon</taxon>
    </lineage>
</organism>
<proteinExistence type="predicted"/>
<comment type="subcellular location">
    <subcellularLocation>
        <location>Nucleus</location>
    </subcellularLocation>
</comment>
<reference key="1">
    <citation type="journal article" date="2001" name="Nature">
        <title>Genome sequence and gene compaction of the eukaryote parasite Encephalitozoon cuniculi.</title>
        <authorList>
            <person name="Katinka M.D."/>
            <person name="Duprat S."/>
            <person name="Cornillot E."/>
            <person name="Metenier G."/>
            <person name="Thomarat F."/>
            <person name="Prensier G."/>
            <person name="Barbe V."/>
            <person name="Peyretaillade E."/>
            <person name="Brottier P."/>
            <person name="Wincker P."/>
            <person name="Delbac F."/>
            <person name="El Alaoui H."/>
            <person name="Peyret P."/>
            <person name="Saurin W."/>
            <person name="Gouy M."/>
            <person name="Weissenbach J."/>
            <person name="Vivares C.P."/>
        </authorList>
    </citation>
    <scope>NUCLEOTIDE SEQUENCE [LARGE SCALE GENOMIC DNA]</scope>
    <source>
        <strain>GB-M1</strain>
    </source>
</reference>
<reference key="2">
    <citation type="journal article" date="2003" name="Dev. Genes Evol.">
        <title>The homeobox genes of Encephalitozoon cuniculi (Microsporidia) reveal a putative mating-type locus.</title>
        <authorList>
            <person name="Buerglin T.R."/>
        </authorList>
    </citation>
    <scope>DISCUSSION OF SEQUENCE</scope>
</reference>
<keyword id="KW-0238">DNA-binding</keyword>
<keyword id="KW-0371">Homeobox</keyword>
<keyword id="KW-0539">Nucleus</keyword>
<keyword id="KW-1185">Reference proteome</keyword>
<accession>Q8SW51</accession>
<accession>Q7SI90</accession>
<sequence>MRKNDFDVREMNAALGILKLAREGRGDSDEPDTRTRKTTFQMMVLKEVFKIAPHPSTLTKADLALMIKLPLKAVQIWFQNERSRKERGGRLGKRTRGGKSESIDPVRLFKVIMKVLEKNREGLGF</sequence>
<evidence type="ECO:0000255" key="1">
    <source>
        <dbReference type="PROSITE-ProRule" id="PRU00108"/>
    </source>
</evidence>
<name>HD8_ENCCU</name>